<comment type="function">
    <text evidence="1">Contributes to the efficiency of the cell division process by stabilizing the polymeric form of the cell division protein FtsZ. Acts by promoting interactions between FtsZ protofilaments and suppressing the GTPase activity of FtsZ.</text>
</comment>
<comment type="subunit">
    <text evidence="1">Interacts directly with FtsZ.</text>
</comment>
<comment type="subcellular location">
    <subcellularLocation>
        <location evidence="1">Cytoplasm</location>
    </subcellularLocation>
</comment>
<comment type="similarity">
    <text evidence="1">Belongs to the ZapC family.</text>
</comment>
<protein>
    <recommendedName>
        <fullName evidence="1">Cell division protein ZapC</fullName>
    </recommendedName>
</protein>
<keyword id="KW-0131">Cell cycle</keyword>
<keyword id="KW-0132">Cell division</keyword>
<keyword id="KW-0963">Cytoplasm</keyword>
<keyword id="KW-1185">Reference proteome</keyword>
<keyword id="KW-0717">Septation</keyword>
<accession>Q6LRA1</accession>
<feature type="chain" id="PRO_0000413781" description="Cell division protein ZapC">
    <location>
        <begin position="1"/>
        <end position="179"/>
    </location>
</feature>
<reference key="1">
    <citation type="journal article" date="2005" name="Science">
        <title>Life at depth: Photobacterium profundum genome sequence and expression analysis.</title>
        <authorList>
            <person name="Vezzi A."/>
            <person name="Campanaro S."/>
            <person name="D'Angelo M."/>
            <person name="Simonato F."/>
            <person name="Vitulo N."/>
            <person name="Lauro F.M."/>
            <person name="Cestaro A."/>
            <person name="Malacrida G."/>
            <person name="Simionati B."/>
            <person name="Cannata N."/>
            <person name="Romualdi C."/>
            <person name="Bartlett D.H."/>
            <person name="Valle G."/>
        </authorList>
    </citation>
    <scope>NUCLEOTIDE SEQUENCE [LARGE SCALE GENOMIC DNA]</scope>
    <source>
        <strain>ATCC BAA-1253 / SS9</strain>
    </source>
</reference>
<organism>
    <name type="scientific">Photobacterium profundum (strain SS9)</name>
    <dbReference type="NCBI Taxonomy" id="298386"/>
    <lineage>
        <taxon>Bacteria</taxon>
        <taxon>Pseudomonadati</taxon>
        <taxon>Pseudomonadota</taxon>
        <taxon>Gammaproteobacteria</taxon>
        <taxon>Vibrionales</taxon>
        <taxon>Vibrionaceae</taxon>
        <taxon>Photobacterium</taxon>
    </lineage>
</organism>
<dbReference type="EMBL" id="CR378668">
    <property type="protein sequence ID" value="CAG20175.1"/>
    <property type="molecule type" value="Genomic_DNA"/>
</dbReference>
<dbReference type="RefSeq" id="WP_011218483.1">
    <property type="nucleotide sequence ID" value="NC_006370.1"/>
</dbReference>
<dbReference type="SMR" id="Q6LRA1"/>
<dbReference type="STRING" id="298386.PBPRA1768"/>
<dbReference type="KEGG" id="ppr:PBPRA1768"/>
<dbReference type="eggNOG" id="ENOG502Z8AH">
    <property type="taxonomic scope" value="Bacteria"/>
</dbReference>
<dbReference type="HOGENOM" id="CLU_128248_0_0_6"/>
<dbReference type="Proteomes" id="UP000000593">
    <property type="component" value="Chromosome 1"/>
</dbReference>
<dbReference type="GO" id="GO:0005737">
    <property type="term" value="C:cytoplasm"/>
    <property type="evidence" value="ECO:0007669"/>
    <property type="project" value="UniProtKB-SubCell"/>
</dbReference>
<dbReference type="GO" id="GO:0000917">
    <property type="term" value="P:division septum assembly"/>
    <property type="evidence" value="ECO:0007669"/>
    <property type="project" value="UniProtKB-KW"/>
</dbReference>
<dbReference type="GO" id="GO:0043093">
    <property type="term" value="P:FtsZ-dependent cytokinesis"/>
    <property type="evidence" value="ECO:0007669"/>
    <property type="project" value="UniProtKB-UniRule"/>
</dbReference>
<dbReference type="HAMAP" id="MF_00906">
    <property type="entry name" value="ZapC"/>
    <property type="match status" value="1"/>
</dbReference>
<dbReference type="InterPro" id="IPR009809">
    <property type="entry name" value="ZapC"/>
</dbReference>
<dbReference type="InterPro" id="IPR048372">
    <property type="entry name" value="ZapC_C"/>
</dbReference>
<dbReference type="InterPro" id="IPR048373">
    <property type="entry name" value="ZapC_N"/>
</dbReference>
<dbReference type="Pfam" id="PF07126">
    <property type="entry name" value="ZapC_C"/>
    <property type="match status" value="1"/>
</dbReference>
<dbReference type="Pfam" id="PF21083">
    <property type="entry name" value="ZapC_N"/>
    <property type="match status" value="1"/>
</dbReference>
<dbReference type="PIRSF" id="PIRSF010252">
    <property type="entry name" value="ZapC"/>
    <property type="match status" value="1"/>
</dbReference>
<name>ZAPC_PHOPR</name>
<proteinExistence type="inferred from homology"/>
<gene>
    <name evidence="1" type="primary">zapC</name>
    <name type="ordered locus">PBPRA1768</name>
</gene>
<evidence type="ECO:0000255" key="1">
    <source>
        <dbReference type="HAMAP-Rule" id="MF_00906"/>
    </source>
</evidence>
<sequence>MLKPNNSWMWYFDLKDNSLMLDLGSDMVFRVGIPAKHLIPSASEQCEFTVDDASIFQNYKENVSHLEISEPRKAELALNAVAASRFHKPMMPKSWFFDTQSVSCDPENSDIVTLQTPLGMAKFIVIENSGCASLCMMVDVEPLALSSTKEIRFCDTIKVMNNRITAYEEDAILNLALVG</sequence>